<keyword id="KW-0012">Acyltransferase</keyword>
<keyword id="KW-0025">Alternative splicing</keyword>
<keyword id="KW-0256">Endoplasmic reticulum</keyword>
<keyword id="KW-0472">Membrane</keyword>
<keyword id="KW-1185">Reference proteome</keyword>
<keyword id="KW-0808">Transferase</keyword>
<keyword id="KW-0812">Transmembrane</keyword>
<keyword id="KW-1133">Transmembrane helix</keyword>
<protein>
    <recommendedName>
        <fullName evidence="6">Palmitoyltransferase ZDHHC16B</fullName>
        <ecNumber evidence="2">2.3.1.225</ecNumber>
    </recommendedName>
    <alternativeName>
        <fullName evidence="6">Zinc finger DHHC domain-containing protein 16B</fullName>
        <shortName evidence="6">DHHC-16B</shortName>
    </alternativeName>
</protein>
<accession>A0A0R4IF99</accession>
<accession>A0A0R4IX74</accession>
<accession>F1R4N0</accession>
<accession>R4GEX6</accession>
<evidence type="ECO:0000250" key="1">
    <source>
        <dbReference type="UniProtKB" id="Q8IUH5"/>
    </source>
</evidence>
<evidence type="ECO:0000250" key="2">
    <source>
        <dbReference type="UniProtKB" id="Q969W1"/>
    </source>
</evidence>
<evidence type="ECO:0000250" key="3">
    <source>
        <dbReference type="UniProtKB" id="Q9ESG8"/>
    </source>
</evidence>
<evidence type="ECO:0000255" key="4"/>
<evidence type="ECO:0000255" key="5">
    <source>
        <dbReference type="PROSITE-ProRule" id="PRU00067"/>
    </source>
</evidence>
<evidence type="ECO:0000305" key="6"/>
<evidence type="ECO:0000312" key="7">
    <source>
        <dbReference type="ZFIN" id="ZDB-GENE-040426-1301"/>
    </source>
</evidence>
<dbReference type="EC" id="2.3.1.225" evidence="2"/>
<dbReference type="EMBL" id="CU459184">
    <property type="status" value="NOT_ANNOTATED_CDS"/>
    <property type="molecule type" value="Genomic_DNA"/>
</dbReference>
<dbReference type="RefSeq" id="NP_001314728.1">
    <molecule id="A0A0R4IF99-4"/>
    <property type="nucleotide sequence ID" value="NM_001327799.1"/>
</dbReference>
<dbReference type="RefSeq" id="XP_009304660.1">
    <molecule id="A0A0R4IF99-1"/>
    <property type="nucleotide sequence ID" value="XM_009306385.4"/>
</dbReference>
<dbReference type="RefSeq" id="XP_009304661.1">
    <property type="nucleotide sequence ID" value="XM_009306386.1"/>
</dbReference>
<dbReference type="SMR" id="A0A0R4IF99"/>
<dbReference type="FunCoup" id="A0A0R4IF99">
    <property type="interactions" value="1421"/>
</dbReference>
<dbReference type="STRING" id="7955.ENSDARP00000127039"/>
<dbReference type="PaxDb" id="7955-ENSDARP00000127039"/>
<dbReference type="GeneID" id="393316"/>
<dbReference type="KEGG" id="dre:393316"/>
<dbReference type="AGR" id="ZFIN:ZDB-GENE-040426-1301"/>
<dbReference type="CTD" id="393316"/>
<dbReference type="ZFIN" id="ZDB-GENE-040426-1301">
    <property type="gene designation" value="zdhhc16b"/>
</dbReference>
<dbReference type="eggNOG" id="KOG1313">
    <property type="taxonomic scope" value="Eukaryota"/>
</dbReference>
<dbReference type="InParanoid" id="A0A0R4IF99"/>
<dbReference type="OMA" id="DGIVWDC"/>
<dbReference type="OrthoDB" id="331948at2759"/>
<dbReference type="PRO" id="PR:A0A0R4IF99"/>
<dbReference type="Proteomes" id="UP000000437">
    <property type="component" value="Chromosome 12"/>
</dbReference>
<dbReference type="Bgee" id="ENSDARG00000015989">
    <property type="expression patterns" value="Expressed in early embryo and 26 other cell types or tissues"/>
</dbReference>
<dbReference type="GO" id="GO:0005789">
    <property type="term" value="C:endoplasmic reticulum membrane"/>
    <property type="evidence" value="ECO:0007669"/>
    <property type="project" value="UniProtKB-SubCell"/>
</dbReference>
<dbReference type="GO" id="GO:0005794">
    <property type="term" value="C:Golgi apparatus"/>
    <property type="evidence" value="ECO:0000318"/>
    <property type="project" value="GO_Central"/>
</dbReference>
<dbReference type="GO" id="GO:0016409">
    <property type="term" value="F:palmitoyltransferase activity"/>
    <property type="evidence" value="ECO:0000318"/>
    <property type="project" value="GO_Central"/>
</dbReference>
<dbReference type="GO" id="GO:0019706">
    <property type="term" value="F:protein-cysteine S-palmitoyltransferase activity"/>
    <property type="evidence" value="ECO:0007669"/>
    <property type="project" value="UniProtKB-EC"/>
</dbReference>
<dbReference type="GO" id="GO:0006974">
    <property type="term" value="P:DNA damage response"/>
    <property type="evidence" value="ECO:0000318"/>
    <property type="project" value="GO_Central"/>
</dbReference>
<dbReference type="GO" id="GO:0021899">
    <property type="term" value="P:fibroblast growth factor receptor signaling pathway involved in forebrain neuron fate commitment"/>
    <property type="evidence" value="ECO:0000318"/>
    <property type="project" value="GO_Central"/>
</dbReference>
<dbReference type="GO" id="GO:0007507">
    <property type="term" value="P:heart development"/>
    <property type="evidence" value="ECO:0000318"/>
    <property type="project" value="GO_Central"/>
</dbReference>
<dbReference type="InterPro" id="IPR001594">
    <property type="entry name" value="Palmitoyltrfase_DHHC"/>
</dbReference>
<dbReference type="InterPro" id="IPR039859">
    <property type="entry name" value="PFA4/ZDH16/20/ERF2-like"/>
</dbReference>
<dbReference type="PANTHER" id="PTHR12246">
    <property type="entry name" value="PALMITOYLTRANSFERASE ZDHHC16"/>
    <property type="match status" value="1"/>
</dbReference>
<dbReference type="Pfam" id="PF01529">
    <property type="entry name" value="DHHC"/>
    <property type="match status" value="1"/>
</dbReference>
<dbReference type="PROSITE" id="PS50216">
    <property type="entry name" value="DHHC"/>
    <property type="match status" value="1"/>
</dbReference>
<reference key="1">
    <citation type="journal article" date="2013" name="Nature">
        <title>The zebrafish reference genome sequence and its relationship to the human genome.</title>
        <authorList>
            <person name="Howe K."/>
            <person name="Clark M.D."/>
            <person name="Torroja C.F."/>
            <person name="Torrance J."/>
            <person name="Berthelot C."/>
            <person name="Muffato M."/>
            <person name="Collins J.E."/>
            <person name="Humphray S."/>
            <person name="McLaren K."/>
            <person name="Matthews L."/>
            <person name="McLaren S."/>
            <person name="Sealy I."/>
            <person name="Caccamo M."/>
            <person name="Churcher C."/>
            <person name="Scott C."/>
            <person name="Barrett J.C."/>
            <person name="Koch R."/>
            <person name="Rauch G.J."/>
            <person name="White S."/>
            <person name="Chow W."/>
            <person name="Kilian B."/>
            <person name="Quintais L.T."/>
            <person name="Guerra-Assuncao J.A."/>
            <person name="Zhou Y."/>
            <person name="Gu Y."/>
            <person name="Yen J."/>
            <person name="Vogel J.H."/>
            <person name="Eyre T."/>
            <person name="Redmond S."/>
            <person name="Banerjee R."/>
            <person name="Chi J."/>
            <person name="Fu B."/>
            <person name="Langley E."/>
            <person name="Maguire S.F."/>
            <person name="Laird G.K."/>
            <person name="Lloyd D."/>
            <person name="Kenyon E."/>
            <person name="Donaldson S."/>
            <person name="Sehra H."/>
            <person name="Almeida-King J."/>
            <person name="Loveland J."/>
            <person name="Trevanion S."/>
            <person name="Jones M."/>
            <person name="Quail M."/>
            <person name="Willey D."/>
            <person name="Hunt A."/>
            <person name="Burton J."/>
            <person name="Sims S."/>
            <person name="McLay K."/>
            <person name="Plumb B."/>
            <person name="Davis J."/>
            <person name="Clee C."/>
            <person name="Oliver K."/>
            <person name="Clark R."/>
            <person name="Riddle C."/>
            <person name="Elliot D."/>
            <person name="Threadgold G."/>
            <person name="Harden G."/>
            <person name="Ware D."/>
            <person name="Begum S."/>
            <person name="Mortimore B."/>
            <person name="Kerry G."/>
            <person name="Heath P."/>
            <person name="Phillimore B."/>
            <person name="Tracey A."/>
            <person name="Corby N."/>
            <person name="Dunn M."/>
            <person name="Johnson C."/>
            <person name="Wood J."/>
            <person name="Clark S."/>
            <person name="Pelan S."/>
            <person name="Griffiths G."/>
            <person name="Smith M."/>
            <person name="Glithero R."/>
            <person name="Howden P."/>
            <person name="Barker N."/>
            <person name="Lloyd C."/>
            <person name="Stevens C."/>
            <person name="Harley J."/>
            <person name="Holt K."/>
            <person name="Panagiotidis G."/>
            <person name="Lovell J."/>
            <person name="Beasley H."/>
            <person name="Henderson C."/>
            <person name="Gordon D."/>
            <person name="Auger K."/>
            <person name="Wright D."/>
            <person name="Collins J."/>
            <person name="Raisen C."/>
            <person name="Dyer L."/>
            <person name="Leung K."/>
            <person name="Robertson L."/>
            <person name="Ambridge K."/>
            <person name="Leongamornlert D."/>
            <person name="McGuire S."/>
            <person name="Gilderthorp R."/>
            <person name="Griffiths C."/>
            <person name="Manthravadi D."/>
            <person name="Nichol S."/>
            <person name="Barker G."/>
            <person name="Whitehead S."/>
            <person name="Kay M."/>
            <person name="Brown J."/>
            <person name="Murnane C."/>
            <person name="Gray E."/>
            <person name="Humphries M."/>
            <person name="Sycamore N."/>
            <person name="Barker D."/>
            <person name="Saunders D."/>
            <person name="Wallis J."/>
            <person name="Babbage A."/>
            <person name="Hammond S."/>
            <person name="Mashreghi-Mohammadi M."/>
            <person name="Barr L."/>
            <person name="Martin S."/>
            <person name="Wray P."/>
            <person name="Ellington A."/>
            <person name="Matthews N."/>
            <person name="Ellwood M."/>
            <person name="Woodmansey R."/>
            <person name="Clark G."/>
            <person name="Cooper J."/>
            <person name="Tromans A."/>
            <person name="Grafham D."/>
            <person name="Skuce C."/>
            <person name="Pandian R."/>
            <person name="Andrews R."/>
            <person name="Harrison E."/>
            <person name="Kimberley A."/>
            <person name="Garnett J."/>
            <person name="Fosker N."/>
            <person name="Hall R."/>
            <person name="Garner P."/>
            <person name="Kelly D."/>
            <person name="Bird C."/>
            <person name="Palmer S."/>
            <person name="Gehring I."/>
            <person name="Berger A."/>
            <person name="Dooley C.M."/>
            <person name="Ersan-Urun Z."/>
            <person name="Eser C."/>
            <person name="Geiger H."/>
            <person name="Geisler M."/>
            <person name="Karotki L."/>
            <person name="Kirn A."/>
            <person name="Konantz J."/>
            <person name="Konantz M."/>
            <person name="Oberlander M."/>
            <person name="Rudolph-Geiger S."/>
            <person name="Teucke M."/>
            <person name="Lanz C."/>
            <person name="Raddatz G."/>
            <person name="Osoegawa K."/>
            <person name="Zhu B."/>
            <person name="Rapp A."/>
            <person name="Widaa S."/>
            <person name="Langford C."/>
            <person name="Yang F."/>
            <person name="Schuster S.C."/>
            <person name="Carter N.P."/>
            <person name="Harrow J."/>
            <person name="Ning Z."/>
            <person name="Herrero J."/>
            <person name="Searle S.M."/>
            <person name="Enright A."/>
            <person name="Geisler R."/>
            <person name="Plasterk R.H."/>
            <person name="Lee C."/>
            <person name="Westerfield M."/>
            <person name="de Jong P.J."/>
            <person name="Zon L.I."/>
            <person name="Postlethwait J.H."/>
            <person name="Nusslein-Volhard C."/>
            <person name="Hubbard T.J."/>
            <person name="Roest Crollius H."/>
            <person name="Rogers J."/>
            <person name="Stemple D.L."/>
        </authorList>
    </citation>
    <scope>NUCLEOTIDE SEQUENCE [LARGE SCALE GENOMIC DNA]</scope>
    <source>
        <strain>Tuebingen</strain>
    </source>
</reference>
<feature type="chain" id="PRO_0000442462" description="Palmitoyltransferase ZDHHC16B">
    <location>
        <begin position="1"/>
        <end position="382"/>
    </location>
</feature>
<feature type="topological domain" description="Cytoplasmic" evidence="6">
    <location>
        <begin position="1"/>
        <end position="75"/>
    </location>
</feature>
<feature type="transmembrane region" description="Helical" evidence="4">
    <location>
        <begin position="76"/>
        <end position="96"/>
    </location>
</feature>
<feature type="topological domain" description="Lumenal" evidence="6">
    <location>
        <begin position="97"/>
        <end position="107"/>
    </location>
</feature>
<feature type="transmembrane region" description="Helical" evidence="4">
    <location>
        <begin position="108"/>
        <end position="130"/>
    </location>
</feature>
<feature type="topological domain" description="Cytoplasmic" evidence="6">
    <location>
        <begin position="131"/>
        <end position="196"/>
    </location>
</feature>
<feature type="transmembrane region" description="Helical" evidence="4">
    <location>
        <begin position="197"/>
        <end position="217"/>
    </location>
</feature>
<feature type="topological domain" description="Lumenal" evidence="6">
    <location>
        <begin position="218"/>
        <end position="275"/>
    </location>
</feature>
<feature type="transmembrane region" description="Helical" evidence="4">
    <location>
        <begin position="276"/>
        <end position="296"/>
    </location>
</feature>
<feature type="topological domain" description="Cytoplasmic" evidence="6">
    <location>
        <begin position="297"/>
        <end position="382"/>
    </location>
</feature>
<feature type="domain" description="DHHC" evidence="5">
    <location>
        <begin position="153"/>
        <end position="203"/>
    </location>
</feature>
<feature type="active site" description="S-palmitoyl cysteine intermediate" evidence="5">
    <location>
        <position position="183"/>
    </location>
</feature>
<feature type="splice variant" id="VSP_059245" description="In isoform 3.">
    <original>CILKMDHHC</original>
    <variation>YTTHTHTHT</variation>
    <location>
        <begin position="175"/>
        <end position="183"/>
    </location>
</feature>
<feature type="splice variant" id="VSP_059246" description="In isoform 2.">
    <original>ISAKDMFLDAYNAIESGRYKGGASQG</original>
    <variation>INRNQRGETHQPQGETTTQTQGESTS</variation>
    <location>
        <begin position="214"/>
        <end position="239"/>
    </location>
</feature>
<feature type="splice variant" id="VSP_059247" description="In isoform 3.">
    <original>ISAKDMFLDAYNAIESGRYKGGASQG</original>
    <variation>IRRNQRGETHQPQGETTTQTQGETFP</variation>
    <location>
        <begin position="214"/>
        <end position="239"/>
    </location>
</feature>
<feature type="splice variant" id="VSP_059248" description="In isoform 4.">
    <location>
        <begin position="229"/>
        <end position="255"/>
    </location>
</feature>
<feature type="splice variant" id="VSP_059249" description="In isoform 2 and isoform 3.">
    <location>
        <begin position="240"/>
        <end position="382"/>
    </location>
</feature>
<name>ZD16B_DANRE</name>
<comment type="function">
    <text evidence="2 3">Palmitoyl acyltransferase that mediates palmitoylation of proteins and is required during embryonic heart development. Involved in the proliferation of neural stem cells by regulating the FGF/ERK pathway (By similarity).</text>
</comment>
<comment type="catalytic activity">
    <reaction evidence="2">
        <text>L-cysteinyl-[protein] + hexadecanoyl-CoA = S-hexadecanoyl-L-cysteinyl-[protein] + CoA</text>
        <dbReference type="Rhea" id="RHEA:36683"/>
        <dbReference type="Rhea" id="RHEA-COMP:10131"/>
        <dbReference type="Rhea" id="RHEA-COMP:11032"/>
        <dbReference type="ChEBI" id="CHEBI:29950"/>
        <dbReference type="ChEBI" id="CHEBI:57287"/>
        <dbReference type="ChEBI" id="CHEBI:57379"/>
        <dbReference type="ChEBI" id="CHEBI:74151"/>
        <dbReference type="EC" id="2.3.1.225"/>
    </reaction>
</comment>
<comment type="subcellular location">
    <subcellularLocation>
        <location evidence="2">Endoplasmic reticulum membrane</location>
        <topology evidence="3">Multi-pass membrane protein</topology>
    </subcellularLocation>
</comment>
<comment type="alternative products">
    <event type="alternative splicing"/>
    <isoform>
        <id>A0A0R4IF99-1</id>
        <name>1</name>
        <sequence type="displayed"/>
    </isoform>
    <isoform>
        <id>A0A0R4IF99-2</id>
        <name>2</name>
        <sequence type="described" ref="VSP_059246 VSP_059249"/>
    </isoform>
    <isoform>
        <id>A0A0R4IF99-3</id>
        <name>3</name>
        <sequence type="described" ref="VSP_059245 VSP_059247 VSP_059249"/>
    </isoform>
    <isoform>
        <id>A0A0R4IF99-4</id>
        <name>4</name>
        <sequence type="described" ref="VSP_059248"/>
    </isoform>
</comment>
<comment type="domain">
    <text evidence="1">The DHHC domain is required for palmitoyltransferase activity.</text>
</comment>
<comment type="similarity">
    <text evidence="6">Belongs to the DHHC palmitoyltransferase family.</text>
</comment>
<proteinExistence type="inferred from homology"/>
<organism>
    <name type="scientific">Danio rerio</name>
    <name type="common">Zebrafish</name>
    <name type="synonym">Brachydanio rerio</name>
    <dbReference type="NCBI Taxonomy" id="7955"/>
    <lineage>
        <taxon>Eukaryota</taxon>
        <taxon>Metazoa</taxon>
        <taxon>Chordata</taxon>
        <taxon>Craniata</taxon>
        <taxon>Vertebrata</taxon>
        <taxon>Euteleostomi</taxon>
        <taxon>Actinopterygii</taxon>
        <taxon>Neopterygii</taxon>
        <taxon>Teleostei</taxon>
        <taxon>Ostariophysi</taxon>
        <taxon>Cypriniformes</taxon>
        <taxon>Danionidae</taxon>
        <taxon>Danioninae</taxon>
        <taxon>Danio</taxon>
    </lineage>
</organism>
<sequence length="382" mass="44693">MRSWRWSVSRIMRLFLRWFRLCPRRGHRKRSRVRDLWNYGMVVLKSLYYNVQTNSDTVLDCMFEPIYWLVDNMTRWFGVVFVCLVMALTSSVVVIVYLCVLPIIFSSYPVYWILWHLCYGHWNLLMVVFHYYKATTTQPGFPPQEKTDIPTVTICKKCIVPKPARTHHCSICNRCILKMDHHCPWLNNCVGHFNHRYFFSFCLFMTMGCVYCSISAKDMFLDAYNAIESGRYKGGASQGEAVPGAGLIYISFQHQSSYQTPPPAFTHQERMVHKSLVYLWVLTSSVAVALGALTLWHAILITRGETSVERHINRKERRRLKLRGKLFRNPYHHGRINNWRIFFGVEKGSDWLWRVLLPSTHPPLGDGLTWDCPAYKSSTTAI</sequence>
<gene>
    <name evidence="7" type="primary">zdhhc16b</name>
</gene>